<protein>
    <recommendedName>
        <fullName evidence="1">Gamma-glutamyl phosphate reductase</fullName>
        <shortName evidence="1">GPR</shortName>
        <ecNumber evidence="1">1.2.1.41</ecNumber>
    </recommendedName>
    <alternativeName>
        <fullName evidence="1">Glutamate-5-semialdehyde dehydrogenase</fullName>
    </alternativeName>
    <alternativeName>
        <fullName evidence="1">Glutamyl-gamma-semialdehyde dehydrogenase</fullName>
        <shortName evidence="1">GSA dehydrogenase</shortName>
    </alternativeName>
</protein>
<gene>
    <name evidence="1" type="primary">proA</name>
    <name type="ordered locus">Pcryo_0322</name>
</gene>
<reference key="1">
    <citation type="submission" date="2006-03" db="EMBL/GenBank/DDBJ databases">
        <title>Complete sequence of chromosome of Psychrobacter cryohalolentis K5.</title>
        <authorList>
            <consortium name="US DOE Joint Genome Institute"/>
            <person name="Copeland A."/>
            <person name="Lucas S."/>
            <person name="Lapidus A."/>
            <person name="Barry K."/>
            <person name="Detter J.C."/>
            <person name="Glavina T."/>
            <person name="Hammon N."/>
            <person name="Israni S."/>
            <person name="Dalin E."/>
            <person name="Tice H."/>
            <person name="Pitluck S."/>
            <person name="Brettin T."/>
            <person name="Bruce D."/>
            <person name="Han C."/>
            <person name="Tapia R."/>
            <person name="Sims D.R."/>
            <person name="Gilna P."/>
            <person name="Schmutz J."/>
            <person name="Larimer F."/>
            <person name="Land M."/>
            <person name="Hauser L."/>
            <person name="Kyrpides N."/>
            <person name="Kim E."/>
            <person name="Richardson P."/>
        </authorList>
    </citation>
    <scope>NUCLEOTIDE SEQUENCE [LARGE SCALE GENOMIC DNA]</scope>
    <source>
        <strain>ATCC BAA-1226 / DSM 17306 / VKM B-2378 / K5</strain>
    </source>
</reference>
<comment type="function">
    <text evidence="1">Catalyzes the NADPH-dependent reduction of L-glutamate 5-phosphate into L-glutamate 5-semialdehyde and phosphate. The product spontaneously undergoes cyclization to form 1-pyrroline-5-carboxylate.</text>
</comment>
<comment type="catalytic activity">
    <reaction evidence="1">
        <text>L-glutamate 5-semialdehyde + phosphate + NADP(+) = L-glutamyl 5-phosphate + NADPH + H(+)</text>
        <dbReference type="Rhea" id="RHEA:19541"/>
        <dbReference type="ChEBI" id="CHEBI:15378"/>
        <dbReference type="ChEBI" id="CHEBI:43474"/>
        <dbReference type="ChEBI" id="CHEBI:57783"/>
        <dbReference type="ChEBI" id="CHEBI:58066"/>
        <dbReference type="ChEBI" id="CHEBI:58274"/>
        <dbReference type="ChEBI" id="CHEBI:58349"/>
        <dbReference type="EC" id="1.2.1.41"/>
    </reaction>
</comment>
<comment type="pathway">
    <text evidence="1">Amino-acid biosynthesis; L-proline biosynthesis; L-glutamate 5-semialdehyde from L-glutamate: step 2/2.</text>
</comment>
<comment type="subcellular location">
    <subcellularLocation>
        <location evidence="1">Cytoplasm</location>
    </subcellularLocation>
</comment>
<comment type="similarity">
    <text evidence="1">Belongs to the gamma-glutamyl phosphate reductase family.</text>
</comment>
<proteinExistence type="inferred from homology"/>
<feature type="chain" id="PRO_0000252582" description="Gamma-glutamyl phosphate reductase">
    <location>
        <begin position="1"/>
        <end position="433"/>
    </location>
</feature>
<sequence>MSQTNTTDVTAYMQNVGKEARAASRALAAANTGDKNAALMAIHDVLKNAKQDILAANTVDMDNGQKNDLDAALLDRLELNDARFDGMLQGLKDVAALPDPIGEVTDMTYRPSGIHLGKMRVPLGVVGMIYESRPNVTLEAASLALKSGNAIILRGGSEAFESNQAIAKCILEGLKNVGMSEYSVQVLETTDRAAVGELITMTEYVDVIVPRGGKGLIERISRDARVPVIKHLDGNCHTFIDSDADPEIAINVSVNAKTHRYGTCNTMETLLVDEAIADELLPKIAEAIVEADNAMQLRLDDKAQAILNDNTILKGHLSAATAEDWDTEYLAPILAIKILSGIDEAIEHINTHGSHHTDVIITDNYTKSQRFIREVDSASVMINASSRFADGFEYGLGAEIGISTDKIHARGPVGLEGLTSQKWIVYGHGETRA</sequence>
<dbReference type="EC" id="1.2.1.41" evidence="1"/>
<dbReference type="EMBL" id="CP000323">
    <property type="protein sequence ID" value="ABE74106.1"/>
    <property type="molecule type" value="Genomic_DNA"/>
</dbReference>
<dbReference type="RefSeq" id="WP_011512692.1">
    <property type="nucleotide sequence ID" value="NC_007969.1"/>
</dbReference>
<dbReference type="SMR" id="Q1QDZ7"/>
<dbReference type="STRING" id="335284.Pcryo_0322"/>
<dbReference type="KEGG" id="pcr:Pcryo_0322"/>
<dbReference type="eggNOG" id="COG0014">
    <property type="taxonomic scope" value="Bacteria"/>
</dbReference>
<dbReference type="HOGENOM" id="CLU_030231_0_0_6"/>
<dbReference type="UniPathway" id="UPA00098">
    <property type="reaction ID" value="UER00360"/>
</dbReference>
<dbReference type="Proteomes" id="UP000002425">
    <property type="component" value="Chromosome"/>
</dbReference>
<dbReference type="GO" id="GO:0005737">
    <property type="term" value="C:cytoplasm"/>
    <property type="evidence" value="ECO:0007669"/>
    <property type="project" value="UniProtKB-SubCell"/>
</dbReference>
<dbReference type="GO" id="GO:0004350">
    <property type="term" value="F:glutamate-5-semialdehyde dehydrogenase activity"/>
    <property type="evidence" value="ECO:0007669"/>
    <property type="project" value="UniProtKB-UniRule"/>
</dbReference>
<dbReference type="GO" id="GO:0050661">
    <property type="term" value="F:NADP binding"/>
    <property type="evidence" value="ECO:0007669"/>
    <property type="project" value="InterPro"/>
</dbReference>
<dbReference type="GO" id="GO:0055129">
    <property type="term" value="P:L-proline biosynthetic process"/>
    <property type="evidence" value="ECO:0007669"/>
    <property type="project" value="UniProtKB-UniRule"/>
</dbReference>
<dbReference type="CDD" id="cd07079">
    <property type="entry name" value="ALDH_F18-19_ProA-GPR"/>
    <property type="match status" value="1"/>
</dbReference>
<dbReference type="FunFam" id="3.40.309.10:FF:000006">
    <property type="entry name" value="Gamma-glutamyl phosphate reductase"/>
    <property type="match status" value="1"/>
</dbReference>
<dbReference type="Gene3D" id="3.40.605.10">
    <property type="entry name" value="Aldehyde Dehydrogenase, Chain A, domain 1"/>
    <property type="match status" value="1"/>
</dbReference>
<dbReference type="Gene3D" id="3.40.309.10">
    <property type="entry name" value="Aldehyde Dehydrogenase, Chain A, domain 2"/>
    <property type="match status" value="1"/>
</dbReference>
<dbReference type="HAMAP" id="MF_00412">
    <property type="entry name" value="ProA"/>
    <property type="match status" value="1"/>
</dbReference>
<dbReference type="InterPro" id="IPR016161">
    <property type="entry name" value="Ald_DH/histidinol_DH"/>
</dbReference>
<dbReference type="InterPro" id="IPR016163">
    <property type="entry name" value="Ald_DH_C"/>
</dbReference>
<dbReference type="InterPro" id="IPR016162">
    <property type="entry name" value="Ald_DH_N"/>
</dbReference>
<dbReference type="InterPro" id="IPR015590">
    <property type="entry name" value="Aldehyde_DH_dom"/>
</dbReference>
<dbReference type="InterPro" id="IPR012134">
    <property type="entry name" value="Glu-5-SA_DH"/>
</dbReference>
<dbReference type="InterPro" id="IPR000965">
    <property type="entry name" value="GPR_dom"/>
</dbReference>
<dbReference type="NCBIfam" id="NF001221">
    <property type="entry name" value="PRK00197.1"/>
    <property type="match status" value="1"/>
</dbReference>
<dbReference type="NCBIfam" id="TIGR00407">
    <property type="entry name" value="proA"/>
    <property type="match status" value="1"/>
</dbReference>
<dbReference type="PANTHER" id="PTHR11063:SF8">
    <property type="entry name" value="DELTA-1-PYRROLINE-5-CARBOXYLATE SYNTHASE"/>
    <property type="match status" value="1"/>
</dbReference>
<dbReference type="PANTHER" id="PTHR11063">
    <property type="entry name" value="GLUTAMATE SEMIALDEHYDE DEHYDROGENASE"/>
    <property type="match status" value="1"/>
</dbReference>
<dbReference type="Pfam" id="PF00171">
    <property type="entry name" value="Aldedh"/>
    <property type="match status" value="2"/>
</dbReference>
<dbReference type="PIRSF" id="PIRSF000151">
    <property type="entry name" value="GPR"/>
    <property type="match status" value="1"/>
</dbReference>
<dbReference type="SUPFAM" id="SSF53720">
    <property type="entry name" value="ALDH-like"/>
    <property type="match status" value="1"/>
</dbReference>
<organism>
    <name type="scientific">Psychrobacter cryohalolentis (strain ATCC BAA-1226 / DSM 17306 / VKM B-2378 / K5)</name>
    <dbReference type="NCBI Taxonomy" id="335284"/>
    <lineage>
        <taxon>Bacteria</taxon>
        <taxon>Pseudomonadati</taxon>
        <taxon>Pseudomonadota</taxon>
        <taxon>Gammaproteobacteria</taxon>
        <taxon>Moraxellales</taxon>
        <taxon>Moraxellaceae</taxon>
        <taxon>Psychrobacter</taxon>
    </lineage>
</organism>
<accession>Q1QDZ7</accession>
<name>PROA_PSYCK</name>
<keyword id="KW-0028">Amino-acid biosynthesis</keyword>
<keyword id="KW-0963">Cytoplasm</keyword>
<keyword id="KW-0521">NADP</keyword>
<keyword id="KW-0560">Oxidoreductase</keyword>
<keyword id="KW-0641">Proline biosynthesis</keyword>
<evidence type="ECO:0000255" key="1">
    <source>
        <dbReference type="HAMAP-Rule" id="MF_00412"/>
    </source>
</evidence>